<dbReference type="EMBL" id="AB016871">
    <property type="protein sequence ID" value="BAB10654.1"/>
    <property type="status" value="ALT_SEQ"/>
    <property type="molecule type" value="Genomic_DNA"/>
</dbReference>
<dbReference type="EMBL" id="CP002688">
    <property type="protein sequence ID" value="AED94729.1"/>
    <property type="molecule type" value="Genomic_DNA"/>
</dbReference>
<dbReference type="EMBL" id="CP002688">
    <property type="protein sequence ID" value="ANM68798.1"/>
    <property type="molecule type" value="Genomic_DNA"/>
</dbReference>
<dbReference type="EMBL" id="U20810">
    <property type="protein sequence ID" value="AAC49006.1"/>
    <property type="status" value="ALT_INIT"/>
    <property type="molecule type" value="mRNA"/>
</dbReference>
<dbReference type="RefSeq" id="NP_001330520.1">
    <property type="nucleotide sequence ID" value="NM_001344421.1"/>
</dbReference>
<dbReference type="RefSeq" id="NP_198994.2">
    <property type="nucleotide sequence ID" value="NM_123544.3"/>
</dbReference>
<dbReference type="SMR" id="F4JZY1"/>
<dbReference type="FunCoup" id="F4JZY1">
    <property type="interactions" value="23"/>
</dbReference>
<dbReference type="IntAct" id="F4JZY1">
    <property type="interactions" value="1"/>
</dbReference>
<dbReference type="STRING" id="3702.F4JZY1"/>
<dbReference type="iPTMnet" id="F4JZY1"/>
<dbReference type="PaxDb" id="3702-AT5G41790.1"/>
<dbReference type="ProteomicsDB" id="246946"/>
<dbReference type="EnsemblPlants" id="AT5G41790.1">
    <property type="protein sequence ID" value="AT5G41790.1"/>
    <property type="gene ID" value="AT5G41790"/>
</dbReference>
<dbReference type="EnsemblPlants" id="AT5G41790.2">
    <property type="protein sequence ID" value="AT5G41790.2"/>
    <property type="gene ID" value="AT5G41790"/>
</dbReference>
<dbReference type="GeneID" id="834184"/>
<dbReference type="Gramene" id="AT5G41790.1">
    <property type="protein sequence ID" value="AT5G41790.1"/>
    <property type="gene ID" value="AT5G41790"/>
</dbReference>
<dbReference type="Gramene" id="AT5G41790.2">
    <property type="protein sequence ID" value="AT5G41790.2"/>
    <property type="gene ID" value="AT5G41790"/>
</dbReference>
<dbReference type="KEGG" id="ath:AT5G41790"/>
<dbReference type="Araport" id="AT5G41790"/>
<dbReference type="TAIR" id="AT5G41790">
    <property type="gene designation" value="CIP1"/>
</dbReference>
<dbReference type="eggNOG" id="ENOG502QWGN">
    <property type="taxonomic scope" value="Eukaryota"/>
</dbReference>
<dbReference type="HOGENOM" id="CLU_250597_0_0_1"/>
<dbReference type="InParanoid" id="F4JZY1"/>
<dbReference type="OMA" id="SETHETH"/>
<dbReference type="CD-CODE" id="4299E36E">
    <property type="entry name" value="Nucleolus"/>
</dbReference>
<dbReference type="PRO" id="PR:F4JZY1"/>
<dbReference type="Proteomes" id="UP000006548">
    <property type="component" value="Chromosome 5"/>
</dbReference>
<dbReference type="ExpressionAtlas" id="F4JZY1">
    <property type="expression patterns" value="baseline and differential"/>
</dbReference>
<dbReference type="GO" id="GO:0005856">
    <property type="term" value="C:cytoskeleton"/>
    <property type="evidence" value="ECO:0000314"/>
    <property type="project" value="TAIR"/>
</dbReference>
<dbReference type="GO" id="GO:0005829">
    <property type="term" value="C:cytosol"/>
    <property type="evidence" value="ECO:0007005"/>
    <property type="project" value="TAIR"/>
</dbReference>
<dbReference type="GO" id="GO:0000325">
    <property type="term" value="C:plant-type vacuole"/>
    <property type="evidence" value="ECO:0007005"/>
    <property type="project" value="TAIR"/>
</dbReference>
<dbReference type="GO" id="GO:0005886">
    <property type="term" value="C:plasma membrane"/>
    <property type="evidence" value="ECO:0000314"/>
    <property type="project" value="TAIR"/>
</dbReference>
<dbReference type="GO" id="GO:0009536">
    <property type="term" value="C:plastid"/>
    <property type="evidence" value="ECO:0007005"/>
    <property type="project" value="TAIR"/>
</dbReference>
<dbReference type="GO" id="GO:0003779">
    <property type="term" value="F:actin binding"/>
    <property type="evidence" value="ECO:0007669"/>
    <property type="project" value="InterPro"/>
</dbReference>
<dbReference type="GO" id="GO:0009738">
    <property type="term" value="P:abscisic acid-activated signaling pathway"/>
    <property type="evidence" value="ECO:0007669"/>
    <property type="project" value="UniProtKB-KW"/>
</dbReference>
<dbReference type="GO" id="GO:0071215">
    <property type="term" value="P:cellular response to abscisic acid stimulus"/>
    <property type="evidence" value="ECO:0000315"/>
    <property type="project" value="TAIR"/>
</dbReference>
<dbReference type="GO" id="GO:0009789">
    <property type="term" value="P:positive regulation of abscisic acid-activated signaling pathway"/>
    <property type="evidence" value="ECO:0000315"/>
    <property type="project" value="UniProtKB"/>
</dbReference>
<dbReference type="GO" id="GO:0042306">
    <property type="term" value="P:regulation of protein import into nucleus"/>
    <property type="evidence" value="ECO:0000304"/>
    <property type="project" value="TAIR"/>
</dbReference>
<dbReference type="GO" id="GO:0009737">
    <property type="term" value="P:response to abscisic acid"/>
    <property type="evidence" value="ECO:0000270"/>
    <property type="project" value="UniProtKB"/>
</dbReference>
<dbReference type="GO" id="GO:0006970">
    <property type="term" value="P:response to osmotic stress"/>
    <property type="evidence" value="ECO:0000315"/>
    <property type="project" value="UniProtKB"/>
</dbReference>
<dbReference type="Gene3D" id="1.10.287.1490">
    <property type="match status" value="3"/>
</dbReference>
<dbReference type="Gene3D" id="1.10.287.2610">
    <property type="match status" value="1"/>
</dbReference>
<dbReference type="InterPro" id="IPR011684">
    <property type="entry name" value="NAB"/>
</dbReference>
<dbReference type="PANTHER" id="PTHR47357">
    <property type="entry name" value="COP1-INTERACTIVE PROTEIN 1"/>
    <property type="match status" value="1"/>
</dbReference>
<dbReference type="PANTHER" id="PTHR47357:SF10">
    <property type="entry name" value="COP1-INTERACTIVE PROTEIN 1"/>
    <property type="match status" value="1"/>
</dbReference>
<dbReference type="SUPFAM" id="SSF57997">
    <property type="entry name" value="Tropomyosin"/>
    <property type="match status" value="1"/>
</dbReference>
<dbReference type="PROSITE" id="PS51774">
    <property type="entry name" value="NAB"/>
    <property type="match status" value="1"/>
</dbReference>
<accession>F4JZY1</accession>
<accession>Q38843</accession>
<accession>Q9FJ35</accession>
<organism>
    <name type="scientific">Arabidopsis thaliana</name>
    <name type="common">Mouse-ear cress</name>
    <dbReference type="NCBI Taxonomy" id="3702"/>
    <lineage>
        <taxon>Eukaryota</taxon>
        <taxon>Viridiplantae</taxon>
        <taxon>Streptophyta</taxon>
        <taxon>Embryophyta</taxon>
        <taxon>Tracheophyta</taxon>
        <taxon>Spermatophyta</taxon>
        <taxon>Magnoliopsida</taxon>
        <taxon>eudicotyledons</taxon>
        <taxon>Gunneridae</taxon>
        <taxon>Pentapetalae</taxon>
        <taxon>rosids</taxon>
        <taxon>malvids</taxon>
        <taxon>Brassicales</taxon>
        <taxon>Brassicaceae</taxon>
        <taxon>Camelineae</taxon>
        <taxon>Arabidopsis</taxon>
    </lineage>
</organism>
<name>CIP1_ARATH</name>
<feature type="chain" id="PRO_0000441893" description="COP1-interactive protein 1">
    <location>
        <begin position="1"/>
        <end position="1586"/>
    </location>
</feature>
<feature type="domain" description="NAB" evidence="2">
    <location>
        <begin position="10"/>
        <end position="84"/>
    </location>
</feature>
<feature type="repeat" description="LRR 1" evidence="1">
    <location>
        <begin position="173"/>
        <end position="187"/>
    </location>
</feature>
<feature type="repeat" description="LRR 2" evidence="1">
    <location>
        <begin position="188"/>
        <end position="210"/>
    </location>
</feature>
<feature type="repeat" description="LRR 3" evidence="1">
    <location>
        <begin position="216"/>
        <end position="239"/>
    </location>
</feature>
<feature type="repeat" description="LRR 4" evidence="1">
    <location>
        <begin position="261"/>
        <end position="285"/>
    </location>
</feature>
<feature type="repeat" description="LRR 5" evidence="1">
    <location>
        <begin position="287"/>
        <end position="309"/>
    </location>
</feature>
<feature type="repeat" description="LRR 6" evidence="1">
    <location>
        <begin position="384"/>
        <end position="410"/>
    </location>
</feature>
<feature type="repeat" description="LRR 7" evidence="1">
    <location>
        <begin position="437"/>
        <end position="461"/>
    </location>
</feature>
<feature type="repeat" description="LRR 8" evidence="1">
    <location>
        <begin position="473"/>
        <end position="498"/>
    </location>
</feature>
<feature type="repeat" description="LRR 9" evidence="1">
    <location>
        <begin position="560"/>
        <end position="586"/>
    </location>
</feature>
<feature type="repeat" description="LRR 10" evidence="1">
    <location>
        <begin position="613"/>
        <end position="637"/>
    </location>
</feature>
<feature type="repeat" description="LRR 11" evidence="1">
    <location>
        <begin position="649"/>
        <end position="674"/>
    </location>
</feature>
<feature type="repeat" description="LRR 12" evidence="1">
    <location>
        <begin position="768"/>
        <end position="792"/>
    </location>
</feature>
<feature type="repeat" description="LRR 13" evidence="1">
    <location>
        <begin position="824"/>
        <end position="850"/>
    </location>
</feature>
<feature type="repeat" description="LRR 14" evidence="1">
    <location>
        <begin position="856"/>
        <end position="880"/>
    </location>
</feature>
<feature type="repeat" description="LRR 15" evidence="1">
    <location>
        <begin position="902"/>
        <end position="929"/>
    </location>
</feature>
<feature type="repeat" description="LRR 16" evidence="1">
    <location>
        <begin position="944"/>
        <end position="968"/>
    </location>
</feature>
<feature type="repeat" description="LRR 17" evidence="1">
    <location>
        <begin position="990"/>
        <end position="1014"/>
    </location>
</feature>
<feature type="repeat" description="LRR 18" evidence="1">
    <location>
        <begin position="1077"/>
        <end position="1101"/>
    </location>
</feature>
<feature type="repeat" description="LRR 19" evidence="1">
    <location>
        <begin position="1120"/>
        <end position="1144"/>
    </location>
</feature>
<feature type="repeat" description="LRR 20" evidence="1">
    <location>
        <begin position="1195"/>
        <end position="1220"/>
    </location>
</feature>
<feature type="repeat" description="LRR 21" evidence="1">
    <location>
        <begin position="1247"/>
        <end position="1272"/>
    </location>
</feature>
<feature type="repeat" description="LRR 22" evidence="1">
    <location>
        <begin position="1372"/>
        <end position="1396"/>
    </location>
</feature>
<feature type="repeat" description="LRR 23" evidence="1">
    <location>
        <begin position="1398"/>
        <end position="1417"/>
    </location>
</feature>
<feature type="repeat" description="LRR 24" evidence="1">
    <location>
        <begin position="1426"/>
        <end position="1448"/>
    </location>
</feature>
<feature type="repeat" description="LRR 25" evidence="1">
    <location>
        <begin position="1450"/>
        <end position="1474"/>
    </location>
</feature>
<feature type="region of interest" description="Disordered" evidence="3">
    <location>
        <begin position="88"/>
        <end position="119"/>
    </location>
</feature>
<feature type="region of interest" description="Disordered" evidence="3">
    <location>
        <begin position="249"/>
        <end position="286"/>
    </location>
</feature>
<feature type="region of interest" description="Disordered" evidence="3">
    <location>
        <begin position="325"/>
        <end position="353"/>
    </location>
</feature>
<feature type="region of interest" description="Disordered" evidence="3">
    <location>
        <begin position="430"/>
        <end position="456"/>
    </location>
</feature>
<feature type="region of interest" description="Disordered" evidence="3">
    <location>
        <begin position="965"/>
        <end position="985"/>
    </location>
</feature>
<feature type="coiled-coil region" evidence="1">
    <location>
        <begin position="128"/>
        <end position="411"/>
    </location>
</feature>
<feature type="coiled-coil region" evidence="1">
    <location>
        <begin position="437"/>
        <end position="1196"/>
    </location>
</feature>
<feature type="coiled-coil region" evidence="1">
    <location>
        <begin position="1225"/>
        <end position="1336"/>
    </location>
</feature>
<feature type="coiled-coil region" evidence="1">
    <location>
        <begin position="1372"/>
        <end position="1406"/>
    </location>
</feature>
<feature type="coiled-coil region" evidence="1">
    <location>
        <begin position="1496"/>
        <end position="1530"/>
    </location>
</feature>
<feature type="compositionally biased region" description="Basic and acidic residues" evidence="3">
    <location>
        <begin position="249"/>
        <end position="262"/>
    </location>
</feature>
<feature type="compositionally biased region" description="Polar residues" evidence="3">
    <location>
        <begin position="444"/>
        <end position="455"/>
    </location>
</feature>
<feature type="sequence conflict" description="In Ref. 3; AAC49006." evidence="7" ref="3">
    <original>L</original>
    <variation>K</variation>
    <location>
        <position position="496"/>
    </location>
</feature>
<feature type="sequence conflict" description="In Ref. 3; AAC49006." evidence="7" ref="3">
    <original>E</original>
    <variation>Q</variation>
    <location>
        <position position="562"/>
    </location>
</feature>
<evidence type="ECO:0000255" key="1"/>
<evidence type="ECO:0000255" key="2">
    <source>
        <dbReference type="PROSITE-ProRule" id="PRU01110"/>
    </source>
</evidence>
<evidence type="ECO:0000256" key="3">
    <source>
        <dbReference type="SAM" id="MobiDB-lite"/>
    </source>
</evidence>
<evidence type="ECO:0000269" key="4">
    <source>
    </source>
</evidence>
<evidence type="ECO:0000269" key="5">
    <source>
    </source>
</evidence>
<evidence type="ECO:0000303" key="6">
    <source>
    </source>
</evidence>
<evidence type="ECO:0000305" key="7"/>
<evidence type="ECO:0000312" key="8">
    <source>
        <dbReference type="Araport" id="AT5G41790"/>
    </source>
</evidence>
<evidence type="ECO:0000312" key="9">
    <source>
        <dbReference type="EMBL" id="BAB10654.1"/>
    </source>
</evidence>
<reference key="1">
    <citation type="journal article" date="1998" name="DNA Res.">
        <title>Structural analysis of Arabidopsis thaliana chromosome 5. VII. Sequence features of the regions of 1,013,767 bp covered by sixteen physically assigned P1 and TAC clones.</title>
        <authorList>
            <person name="Nakamura Y."/>
            <person name="Sato S."/>
            <person name="Asamizu E."/>
            <person name="Kaneko T."/>
            <person name="Kotani H."/>
            <person name="Miyajima N."/>
            <person name="Tabata S."/>
        </authorList>
    </citation>
    <scope>NUCLEOTIDE SEQUENCE [LARGE SCALE GENOMIC DNA]</scope>
    <source>
        <strain>cv. Columbia</strain>
    </source>
</reference>
<reference key="2">
    <citation type="journal article" date="2017" name="Plant J.">
        <title>Araport11: a complete reannotation of the Arabidopsis thaliana reference genome.</title>
        <authorList>
            <person name="Cheng C.Y."/>
            <person name="Krishnakumar V."/>
            <person name="Chan A.P."/>
            <person name="Thibaud-Nissen F."/>
            <person name="Schobel S."/>
            <person name="Town C.D."/>
        </authorList>
    </citation>
    <scope>GENOME REANNOTATION</scope>
    <source>
        <strain>cv. Columbia</strain>
    </source>
</reference>
<reference key="3">
    <citation type="journal article" date="1995" name="Proc. Natl. Acad. Sci. U.S.A.">
        <title>Arabidopsis COP1 protein specifically interacts in vitro with a cytoskeleton-associated protein, CIP1.</title>
        <authorList>
            <person name="Matsui M."/>
            <person name="Stoop C.D."/>
            <person name="von Arnim A.G."/>
            <person name="Wei N."/>
            <person name="Deng X.-W."/>
        </authorList>
    </citation>
    <scope>NUCLEOTIDE SEQUENCE [MRNA] OF 250-748</scope>
    <scope>INTERACTION WITH COP1</scope>
    <scope>SUBCELLULAR LOCATION</scope>
    <source>
        <strain>cv. Columbia</strain>
    </source>
</reference>
<reference key="4">
    <citation type="journal article" date="2016" name="Biochem. Biophys. Res. Commun.">
        <title>Arabidopsis COP1-interacting protein 1 is a positive regulator of ABA response.</title>
        <authorList>
            <person name="Ren C."/>
            <person name="Zhu X."/>
            <person name="Zhang P."/>
            <person name="Gong Q."/>
        </authorList>
    </citation>
    <scope>FUNCTION</scope>
    <scope>DISRUPTION PHENOTYPE</scope>
    <scope>TISSUE SPECIFICITY</scope>
    <scope>INDUCTION BY OSMOTIC STRESS AND ABSCISIC ACID</scope>
    <scope>SUBCELLULAR LOCATION</scope>
    <scope>DEVELOPMENTAL STAGE</scope>
    <source>
        <strain>cv. Columbia</strain>
    </source>
</reference>
<sequence>MKKHKFRETLKSFFEPHFDHEKGEMLKGTKTEIDEKVNKILGMVESGDVNEDESNRQVVADLVKEFYSEYQSLYRQYDDLTGEIRKKVNGKGESSSSSSSDSDSDHSSKRKVKRNGNGKVEKDVELVTGALKQQIEAANLEIADLKGKLTTTVEEKEAVDSELELALMKLKESEEISSKLKLETEKLEDEKSIALSDNRELHQKLEVAGKTETDLNQKLEDIKKERDELQTERDNGIKRFQEAEKVAEDWKTTSDQLKDETSNLKQQLEASEQRVSELTSGMNSAEEENKSLSLKVSEISDVIQQGQTTIQELISELGEMKEKYKEKESEHSSLVELHKTHERESSSQVKELEAHIESSEKLVADFTQSLNNAEEEKKLLSQKIAELSNEIQEAQNTMQELMSESGQLKESHSVKERELFSLRDIHEIHQRDSSTRASELEAQLESSKQQVSDLSASLKAAEEENKAISSKNVETMNKLEQTQNTIQELMAELGKLKDSHREKESELSSLVEVHETHQRDSSIHVKELEEQVESSKKLVAELNQTLNNAEEEKKVLSQKIAELSNEIKEAQNTIQELVSESGQLKESHSVKDRDLFSLRDIHETHQRESSTRVSELEAQLESSEQRISDLTVDLKDAEEENKAISSKNLEIMDKLEQAQNTIKELMDELGELKDRHKEKESELSSLVKSADQQVADMKQSLDNAEEEKKMLSQRILDISNEIQEAQKTIQEHMSESEQLKESHGVKERELTGLRDIHETHQRESSTRLSELETQLKLLEQRVVDLSASLNAAEEEKKSLSSMILEITDELKQAQSKVQELVTELAESKDTLTQKENELSSFVEVHEAHKRDSSSQVKELEARVESAEEQVKELNQNLNSSEEEKKILSQQISEMSIKIKRAESTIQELSSESERLKGSHAEKDNELFSLRDIHETHQRELSTQLRGLEAQLESSEHRVLELSESLKAAEEESRTMSTKISETSDELERTQIMVQELTADSSKLKEQLAEKESKLFLLTEKDSKSQVQIKELEATVATLELELESVRARIIDLETEIASKTTVVEQLEAQNREMVARISELEKTMEERGTELSALTQKLEDNDKQSSSSIETLTAEIDGLRAELDSMSVQKEEVEKQMVCKSEEASVKIKRLDDEVNGLRQQVASLDSQRAELEIQLEKKSEEISEYLSQITNLKEEIINKVKVHESILEEINGLSEKIKGRELELETLGKQRSELDEELRTKKEENVQMHDKINVASSEIMALTELINNLKNELDSLQVQKSETEAELEREKQEKSELSNQITDVQKALVEQEAAYNTLEEEHKQINELFKETEATLNKVTVDYKEAQRLLEERGKEVTSRDSTIGVHEETMESLRNELEMKGDEIETLMEKISNIEVKLRLSNQKLRVTEQVLTEKEEAFRKEEAKHLEEQALLEKNLTMTHETYRGMIKEIADKVNITVDGFQSMSEKLTEKQGRYEKTVMEASKILWTATNWVIERNHEKEKMNKEIEKKDEEIKKLGGKVREDEKEKEMMKETLMGLGEEKREAIRQLCVWIDHHRSRCEYLEEVLSKTVVARGQRRVSQRT</sequence>
<keyword id="KW-0938">Abscisic acid signaling pathway</keyword>
<keyword id="KW-1003">Cell membrane</keyword>
<keyword id="KW-0175">Coiled coil</keyword>
<keyword id="KW-0963">Cytoplasm</keyword>
<keyword id="KW-0206">Cytoskeleton</keyword>
<keyword id="KW-0433">Leucine-rich repeat</keyword>
<keyword id="KW-0472">Membrane</keyword>
<keyword id="KW-1185">Reference proteome</keyword>
<keyword id="KW-0677">Repeat</keyword>
<proteinExistence type="evidence at protein level"/>
<gene>
    <name evidence="6" type="primary">CIP1</name>
    <name evidence="8" type="ordered locus">At5g41790</name>
    <name evidence="9" type="ORF">K16L22.7</name>
</gene>
<comment type="function">
    <text evidence="4">Positive regulator of abscisic acid (ABA)-mediated signaling pathways involved in abiotic stress responses (e.g. osmotic stress) and leading to various plant adaptation (e.g. stomata closure).</text>
</comment>
<comment type="subunit">
    <text evidence="5">Interacts with COP1 coiled-coil region.</text>
</comment>
<comment type="interaction">
    <interactant intactId="EBI-2119970">
        <id>F4JZY1</id>
    </interactant>
    <interactant intactId="EBI-301649">
        <id>P43254</id>
        <label>COP1</label>
    </interactant>
    <organismsDiffer>false</organismsDiffer>
    <experiments>3</experiments>
</comment>
<comment type="subcellular location">
    <subcellularLocation>
        <location evidence="4">Cell membrane</location>
    </subcellularLocation>
    <subcellularLocation>
        <location evidence="5">Cytoplasm</location>
        <location evidence="5">Cytoskeleton</location>
    </subcellularLocation>
    <text evidence="4 5">Associated to the cytoskeleton in hypocotyl and cotyledon cells, but not in root cells, where observed as disconnected cytoplasmic speckles (PubMed:7753789). Localized to the plasma membrane in the epidermal cells of cotyledons and roots, including root hairs (PubMed:27372427).</text>
</comment>
<comment type="tissue specificity">
    <text evidence="4">Mainly expressed in photosynthetic and vascular tissues. Accumulates in both dark-grown and light-grown seedlings roots and shoots, leaves and flowers (at protein level).</text>
</comment>
<comment type="developmental stage">
    <text evidence="4">In seedlings, accumulates in cotyledons and the hypocotyl, especially in the vein. In adult plants, mainly detected in mature leaves, particularly in vascular tissues. Also present in the vein of sepals and petals of flowers.</text>
</comment>
<comment type="induction">
    <text evidence="4">Induced by osmotic stress (e.g. mannitol) and abscisic acid (ABA).</text>
</comment>
<comment type="disruption phenotype">
    <text evidence="4">Short hypocotyls. Increased sensitivity to osmotic stress (e.g. mannitol), but reduced sensitivity to abscisic acid (ABA) associated with lower levels of abiotic stress-related gene expression but higher ABA biosynthesis genes levels.</text>
</comment>
<comment type="sequence caution" evidence="7">
    <conflict type="erroneous initiation">
        <sequence resource="EMBL-CDS" id="AAC49006"/>
    </conflict>
    <text>Truncated N-terminus.</text>
</comment>
<comment type="sequence caution" evidence="7">
    <conflict type="erroneous gene model prediction">
        <sequence resource="EMBL-CDS" id="BAB10654"/>
    </conflict>
</comment>
<protein>
    <recommendedName>
        <fullName evidence="6">COP1-interactive protein 1</fullName>
    </recommendedName>
</protein>